<sequence length="208" mass="23423">MNSLFTSAFSPLAVSLGLLLVMTSAFPTPGPLGEDFKNDTTPSRLLLTTPEKTEALIKHIVDKISAIRKEICEKNDECENSKETLAENKLKLPKMEEKDGCFQSGFNQAICLIKTTAGLLEYQIYLDFLQNEFEGNQETVMELQSSIRTLIQILKEKIAGLITTPATNTDMLEKMQSSNEWVKNAKVIIILRSLENFLQFSLRAIRMK</sequence>
<organism>
    <name type="scientific">Capra hircus</name>
    <name type="common">Goat</name>
    <dbReference type="NCBI Taxonomy" id="9925"/>
    <lineage>
        <taxon>Eukaryota</taxon>
        <taxon>Metazoa</taxon>
        <taxon>Chordata</taxon>
        <taxon>Craniata</taxon>
        <taxon>Vertebrata</taxon>
        <taxon>Euteleostomi</taxon>
        <taxon>Mammalia</taxon>
        <taxon>Eutheria</taxon>
        <taxon>Laurasiatheria</taxon>
        <taxon>Artiodactyla</taxon>
        <taxon>Ruminantia</taxon>
        <taxon>Pecora</taxon>
        <taxon>Bovidae</taxon>
        <taxon>Caprinae</taxon>
        <taxon>Capra</taxon>
    </lineage>
</organism>
<protein>
    <recommendedName>
        <fullName>Interleukin-6</fullName>
        <shortName>IL-6</shortName>
    </recommendedName>
</protein>
<dbReference type="EMBL" id="D86569">
    <property type="protein sequence ID" value="BAA13118.1"/>
    <property type="molecule type" value="mRNA"/>
</dbReference>
<dbReference type="RefSeq" id="NP_001272569.1">
    <property type="nucleotide sequence ID" value="NM_001285640.1"/>
</dbReference>
<dbReference type="SMR" id="Q28319"/>
<dbReference type="STRING" id="9925.ENSCHIP00000009414"/>
<dbReference type="GlyCosmos" id="Q28319">
    <property type="glycosylation" value="1 site, No reported glycans"/>
</dbReference>
<dbReference type="GeneID" id="100860785"/>
<dbReference type="KEGG" id="chx:100860785"/>
<dbReference type="CTD" id="3569"/>
<dbReference type="OrthoDB" id="8943569at2759"/>
<dbReference type="Proteomes" id="UP000291000">
    <property type="component" value="Unassembled WGS sequence"/>
</dbReference>
<dbReference type="Proteomes" id="UP000694566">
    <property type="component" value="Unplaced"/>
</dbReference>
<dbReference type="GO" id="GO:0005615">
    <property type="term" value="C:extracellular space"/>
    <property type="evidence" value="ECO:0007669"/>
    <property type="project" value="UniProtKB-KW"/>
</dbReference>
<dbReference type="GO" id="GO:0005896">
    <property type="term" value="C:interleukin-6 receptor complex"/>
    <property type="evidence" value="ECO:0007669"/>
    <property type="project" value="TreeGrafter"/>
</dbReference>
<dbReference type="GO" id="GO:0005125">
    <property type="term" value="F:cytokine activity"/>
    <property type="evidence" value="ECO:0007669"/>
    <property type="project" value="UniProtKB-KW"/>
</dbReference>
<dbReference type="GO" id="GO:0008083">
    <property type="term" value="F:growth factor activity"/>
    <property type="evidence" value="ECO:0007669"/>
    <property type="project" value="UniProtKB-KW"/>
</dbReference>
<dbReference type="GO" id="GO:0005138">
    <property type="term" value="F:interleukin-6 receptor binding"/>
    <property type="evidence" value="ECO:0007669"/>
    <property type="project" value="InterPro"/>
</dbReference>
<dbReference type="GO" id="GO:0006953">
    <property type="term" value="P:acute-phase response"/>
    <property type="evidence" value="ECO:0007669"/>
    <property type="project" value="UniProtKB-KW"/>
</dbReference>
<dbReference type="GO" id="GO:0042593">
    <property type="term" value="P:glucose homeostasis"/>
    <property type="evidence" value="ECO:0000250"/>
    <property type="project" value="UniProtKB"/>
</dbReference>
<dbReference type="GO" id="GO:0072574">
    <property type="term" value="P:hepatocyte proliferation"/>
    <property type="evidence" value="ECO:0000250"/>
    <property type="project" value="UniProtKB"/>
</dbReference>
<dbReference type="GO" id="GO:0070102">
    <property type="term" value="P:interleukin-6-mediated signaling pathway"/>
    <property type="evidence" value="ECO:0000250"/>
    <property type="project" value="UniProtKB"/>
</dbReference>
<dbReference type="GO" id="GO:0097421">
    <property type="term" value="P:liver regeneration"/>
    <property type="evidence" value="ECO:0000250"/>
    <property type="project" value="UniProtKB"/>
</dbReference>
<dbReference type="GO" id="GO:0051240">
    <property type="term" value="P:positive regulation of multicellular organismal process"/>
    <property type="evidence" value="ECO:0007669"/>
    <property type="project" value="UniProtKB-ARBA"/>
</dbReference>
<dbReference type="GO" id="GO:0046427">
    <property type="term" value="P:positive regulation of receptor signaling pathway via JAK-STAT"/>
    <property type="evidence" value="ECO:0007669"/>
    <property type="project" value="TreeGrafter"/>
</dbReference>
<dbReference type="GO" id="GO:1904894">
    <property type="term" value="P:positive regulation of receptor signaling pathway via STAT"/>
    <property type="evidence" value="ECO:0000250"/>
    <property type="project" value="UniProtKB"/>
</dbReference>
<dbReference type="GO" id="GO:0070092">
    <property type="term" value="P:regulation of glucagon secretion"/>
    <property type="evidence" value="ECO:0000250"/>
    <property type="project" value="UniProtKB"/>
</dbReference>
<dbReference type="GO" id="GO:0050796">
    <property type="term" value="P:regulation of insulin secretion"/>
    <property type="evidence" value="ECO:0000250"/>
    <property type="project" value="UniProtKB"/>
</dbReference>
<dbReference type="GO" id="GO:0014823">
    <property type="term" value="P:response to activity"/>
    <property type="evidence" value="ECO:0000250"/>
    <property type="project" value="UniProtKB"/>
</dbReference>
<dbReference type="GO" id="GO:0072540">
    <property type="term" value="P:T-helper 17 cell lineage commitment"/>
    <property type="evidence" value="ECO:0000250"/>
    <property type="project" value="UniProtKB"/>
</dbReference>
<dbReference type="GO" id="GO:0010573">
    <property type="term" value="P:vascular endothelial growth factor production"/>
    <property type="evidence" value="ECO:0000250"/>
    <property type="project" value="UniProtKB"/>
</dbReference>
<dbReference type="FunFam" id="1.20.1250.10:FF:000006">
    <property type="entry name" value="Interleukin-6"/>
    <property type="match status" value="1"/>
</dbReference>
<dbReference type="Gene3D" id="1.20.1250.10">
    <property type="match status" value="1"/>
</dbReference>
<dbReference type="InterPro" id="IPR009079">
    <property type="entry name" value="4_helix_cytokine-like_core"/>
</dbReference>
<dbReference type="InterPro" id="IPR003574">
    <property type="entry name" value="IL-6-like"/>
</dbReference>
<dbReference type="InterPro" id="IPR030474">
    <property type="entry name" value="IL-6/GCSF/MGF"/>
</dbReference>
<dbReference type="InterPro" id="IPR030473">
    <property type="entry name" value="IL6/GCSF/MGF_CS"/>
</dbReference>
<dbReference type="PANTHER" id="PTHR48494">
    <property type="entry name" value="INTERLEUKIN-6"/>
    <property type="match status" value="1"/>
</dbReference>
<dbReference type="PANTHER" id="PTHR48494:SF1">
    <property type="entry name" value="INTERLEUKIN-6"/>
    <property type="match status" value="1"/>
</dbReference>
<dbReference type="Pfam" id="PF00489">
    <property type="entry name" value="IL6"/>
    <property type="match status" value="1"/>
</dbReference>
<dbReference type="PIRSF" id="PIRSF001935">
    <property type="entry name" value="IL6_MGF_GCSF"/>
    <property type="match status" value="1"/>
</dbReference>
<dbReference type="PRINTS" id="PR00433">
    <property type="entry name" value="IL6GCSFMGF"/>
</dbReference>
<dbReference type="PRINTS" id="PR00434">
    <property type="entry name" value="INTERLEUKIN6"/>
</dbReference>
<dbReference type="SMART" id="SM00126">
    <property type="entry name" value="IL6"/>
    <property type="match status" value="1"/>
</dbReference>
<dbReference type="SUPFAM" id="SSF47266">
    <property type="entry name" value="4-helical cytokines"/>
    <property type="match status" value="1"/>
</dbReference>
<dbReference type="PROSITE" id="PS00254">
    <property type="entry name" value="INTERLEUKIN_6"/>
    <property type="match status" value="1"/>
</dbReference>
<accession>Q28319</accession>
<gene>
    <name type="primary">IL6</name>
</gene>
<name>IL6_CAPHI</name>
<evidence type="ECO:0000250" key="1"/>
<evidence type="ECO:0000250" key="2">
    <source>
        <dbReference type="UniProtKB" id="P05231"/>
    </source>
</evidence>
<evidence type="ECO:0000250" key="3">
    <source>
        <dbReference type="UniProtKB" id="P08505"/>
    </source>
</evidence>
<evidence type="ECO:0000255" key="4"/>
<evidence type="ECO:0000305" key="5"/>
<feature type="signal peptide" evidence="1">
    <location>
        <begin position="1"/>
        <end position="29"/>
    </location>
</feature>
<feature type="chain" id="PRO_0000015577" description="Interleukin-6">
    <location>
        <begin position="30"/>
        <end position="208"/>
    </location>
</feature>
<feature type="modified residue" description="Phosphoserine" evidence="2">
    <location>
        <position position="81"/>
    </location>
</feature>
<feature type="glycosylation site" description="N-linked (GlcNAc...) asparagine" evidence="4">
    <location>
        <position position="38"/>
    </location>
</feature>
<feature type="disulfide bond" evidence="1">
    <location>
        <begin position="72"/>
        <end position="78"/>
    </location>
</feature>
<feature type="disulfide bond" evidence="1">
    <location>
        <begin position="101"/>
        <end position="111"/>
    </location>
</feature>
<keyword id="KW-0011">Acute phase</keyword>
<keyword id="KW-0202">Cytokine</keyword>
<keyword id="KW-1015">Disulfide bond</keyword>
<keyword id="KW-0325">Glycoprotein</keyword>
<keyword id="KW-0339">Growth factor</keyword>
<keyword id="KW-0597">Phosphoprotein</keyword>
<keyword id="KW-1185">Reference proteome</keyword>
<keyword id="KW-0964">Secreted</keyword>
<keyword id="KW-0732">Signal</keyword>
<comment type="function">
    <text evidence="2">Cytokine with a wide variety of biological functions in immunity, tissue regeneration, and metabolism. Binds to IL6R, then the complex associates to the signaling subunit IL6ST/gp130 to trigger the intracellular IL6-signaling pathway. The interaction with the membrane-bound IL6R and IL6ST stimulates 'classic signaling', whereas the binding of IL6 and soluble IL6R to IL6ST stimulates 'trans-signaling'. Alternatively, 'cluster signaling' occurs when membrane-bound IL6:IL6R complexes on transmitter cells activate IL6ST receptors on neighboring receiver cells.</text>
</comment>
<comment type="function">
    <text evidence="2 3">IL6 is a potent inducer of the acute phase response. Rapid production of IL6 contributes to host defense during infection and tissue injury, but excessive IL6 synthesis is involved in disease pathology. In the innate immune response, is synthesized by myeloid cells, such as macrophages and dendritic cells, upon recognition of pathogens through toll-like receptors (TLRs) at the site of infection or tissue injury (By similarity). In the adaptive immune response, is required for the differentiation of B cells into immunoglobulin-secreting cells. Plays a major role in the differentiation of CD4(+) T cell subsets. Essential factor for the development of T follicular helper (Tfh) cells that are required for the induction of germinal-center formation. Required to drive naive CD4(+) T cells to the Th17 lineage. Also required for proliferation of myeloma cells and the survival of plasmablast cells (By similarity).</text>
</comment>
<comment type="function">
    <text evidence="2 3">Acts as an essential factor in bone homeostasis and on vessels directly or indirectly by induction of VEGF, resulting in increased angiogenesis activity and vascular permeability. Induces, through 'trans-signaling' and synergistically with IL1B and TNF, the production of VEGF. Involved in metabolic controls, is discharged into the bloodstream after muscle contraction increasing lipolysis and improving insulin resistance (By similarity). 'Trans-signaling' in central nervous system also regulates energy and glucose homeostasis. Mediates, through GLP-1, crosstalk between insulin-sensitive tissues, intestinal L cells and pancreatic islets to adapt to changes in insulin demand (By similarity). Also acts as a myokine (By similarity). Plays a protective role during liver injury, being required for maintenance of tissue regeneration (By similarity). Also has a pivotal role in iron metabolism by regulating HAMP/hepcidin expression upon inflammation or bacterial infection (By similarity). Through activation of IL6ST-YAP-NOTCH pathway, induces inflammation-induced epithelial regeneration (By similarity).</text>
</comment>
<comment type="subunit">
    <text evidence="2">Component of a hexamer of two molecules each of IL6, IL6R and IL6ST; first binds to IL6R to associate with the signaling subunit IL6ST. Interacts with IL6R (via the N-terminal ectodomain); this interaction may be affected by IL6R-binding with SORL1, hence decreasing IL6 cis signaling. Interacts with SORL1 (via the N-terminal ectodomain); this interaction leads to IL6 internalization and lysosomal degradation. May form a trimeric complex with the soluble SORL1 ectodomain and soluble IL6R receptor; this interaction might stabilize circulating IL6, hence promoting IL6 trans signaling.</text>
</comment>
<comment type="subcellular location">
    <subcellularLocation>
        <location evidence="2">Secreted</location>
    </subcellularLocation>
</comment>
<comment type="similarity">
    <text evidence="5">Belongs to the IL-6 superfamily.</text>
</comment>
<reference key="1">
    <citation type="journal article" date="1997" name="Int. Arch. Allergy Immunol.">
        <title>Molecular cloning of caprine IL-6 cDNA and its expression in insect cells.</title>
        <authorList>
            <person name="Takakura H."/>
            <person name="Mori Y."/>
            <person name="Tatsumi M."/>
        </authorList>
    </citation>
    <scope>NUCLEOTIDE SEQUENCE [MRNA]</scope>
</reference>
<proteinExistence type="evidence at transcript level"/>